<organism>
    <name type="scientific">Agrobacterium fabrum (strain C58 / ATCC 33970)</name>
    <name type="common">Agrobacterium tumefaciens (strain C58)</name>
    <dbReference type="NCBI Taxonomy" id="176299"/>
    <lineage>
        <taxon>Bacteria</taxon>
        <taxon>Pseudomonadati</taxon>
        <taxon>Pseudomonadota</taxon>
        <taxon>Alphaproteobacteria</taxon>
        <taxon>Hyphomicrobiales</taxon>
        <taxon>Rhizobiaceae</taxon>
        <taxon>Rhizobium/Agrobacterium group</taxon>
        <taxon>Agrobacterium</taxon>
        <taxon>Agrobacterium tumefaciens complex</taxon>
    </lineage>
</organism>
<proteinExistence type="inferred from homology"/>
<gene>
    <name type="primary">norM</name>
    <name type="ordered locus">Atu2172</name>
    <name type="ORF">AGR_C_3941</name>
</gene>
<dbReference type="EMBL" id="AE007869">
    <property type="protein sequence ID" value="AAK87917.1"/>
    <property type="molecule type" value="Genomic_DNA"/>
</dbReference>
<dbReference type="PIR" id="AC2843">
    <property type="entry name" value="AC2843"/>
</dbReference>
<dbReference type="PIR" id="D97620">
    <property type="entry name" value="D97620"/>
</dbReference>
<dbReference type="RefSeq" id="NP_355132.1">
    <property type="nucleotide sequence ID" value="NC_003062.2"/>
</dbReference>
<dbReference type="RefSeq" id="WP_010972113.1">
    <property type="nucleotide sequence ID" value="NC_003062.2"/>
</dbReference>
<dbReference type="SMR" id="Q8UDF5"/>
<dbReference type="STRING" id="176299.Atu2172"/>
<dbReference type="DNASU" id="1134210"/>
<dbReference type="EnsemblBacteria" id="AAK87917">
    <property type="protein sequence ID" value="AAK87917"/>
    <property type="gene ID" value="Atu2172"/>
</dbReference>
<dbReference type="GeneID" id="1134210"/>
<dbReference type="KEGG" id="atu:Atu2172"/>
<dbReference type="PATRIC" id="fig|176299.10.peg.2182"/>
<dbReference type="eggNOG" id="COG0534">
    <property type="taxonomic scope" value="Bacteria"/>
</dbReference>
<dbReference type="HOGENOM" id="CLU_012893_6_3_5"/>
<dbReference type="OrthoDB" id="9780160at2"/>
<dbReference type="PhylomeDB" id="Q8UDF5"/>
<dbReference type="BioCyc" id="AGRO:ATU2172-MONOMER"/>
<dbReference type="Proteomes" id="UP000000813">
    <property type="component" value="Chromosome circular"/>
</dbReference>
<dbReference type="GO" id="GO:0005886">
    <property type="term" value="C:plasma membrane"/>
    <property type="evidence" value="ECO:0007669"/>
    <property type="project" value="UniProtKB-SubCell"/>
</dbReference>
<dbReference type="GO" id="GO:0015297">
    <property type="term" value="F:antiporter activity"/>
    <property type="evidence" value="ECO:0007669"/>
    <property type="project" value="UniProtKB-KW"/>
</dbReference>
<dbReference type="GO" id="GO:0042910">
    <property type="term" value="F:xenobiotic transmembrane transporter activity"/>
    <property type="evidence" value="ECO:0007669"/>
    <property type="project" value="InterPro"/>
</dbReference>
<dbReference type="GO" id="GO:0006811">
    <property type="term" value="P:monoatomic ion transport"/>
    <property type="evidence" value="ECO:0007669"/>
    <property type="project" value="UniProtKB-KW"/>
</dbReference>
<dbReference type="CDD" id="cd13131">
    <property type="entry name" value="MATE_NorM_like"/>
    <property type="match status" value="1"/>
</dbReference>
<dbReference type="InterPro" id="IPR002528">
    <property type="entry name" value="MATE_fam"/>
</dbReference>
<dbReference type="InterPro" id="IPR050222">
    <property type="entry name" value="MATE_MdtK"/>
</dbReference>
<dbReference type="InterPro" id="IPR048279">
    <property type="entry name" value="MdtK-like"/>
</dbReference>
<dbReference type="NCBIfam" id="TIGR00797">
    <property type="entry name" value="matE"/>
    <property type="match status" value="1"/>
</dbReference>
<dbReference type="PANTHER" id="PTHR43298:SF2">
    <property type="entry name" value="FMN_FAD EXPORTER YEEO-RELATED"/>
    <property type="match status" value="1"/>
</dbReference>
<dbReference type="PANTHER" id="PTHR43298">
    <property type="entry name" value="MULTIDRUG RESISTANCE PROTEIN NORM-RELATED"/>
    <property type="match status" value="1"/>
</dbReference>
<dbReference type="Pfam" id="PF01554">
    <property type="entry name" value="MatE"/>
    <property type="match status" value="2"/>
</dbReference>
<dbReference type="PIRSF" id="PIRSF006603">
    <property type="entry name" value="DinF"/>
    <property type="match status" value="1"/>
</dbReference>
<comment type="function">
    <text evidence="1">Multidrug efflux pump.</text>
</comment>
<comment type="subcellular location">
    <subcellularLocation>
        <location evidence="1">Cell inner membrane</location>
        <topology evidence="1">Multi-pass membrane protein</topology>
    </subcellularLocation>
</comment>
<comment type="similarity">
    <text evidence="3">Belongs to the multi antimicrobial extrusion (MATE) (TC 2.A.66.1) family.</text>
</comment>
<sequence>MSSSVVAETVPSGSGSWFSHFKATLVLGIPLIGAQLAQLGIHTTDMVIVGQLGAEKLAAMVLAGQFFFVVFIFGSGFSVAVVPMVAQAYGQGDATSARRSLRMGMWVAIAYWLLALPIFFNAERILVYLGQNPNVAALTGHYLAIAKFGLLPALLFYVLRGLVSAIGRAGIILYVTIIMLVMNGLMAYVLVFGHFGLPAMGMNGAAVVAVIVNAFSFIFIVAYVQTREETKKYELFVRFWRPDWHALFEVLRLGLPISITILAEVTLFAAASILMGQIGTVQLAAHGIALQLASIAFMIPLGLSQAATVRVGVARGQGDFKNLIRASIMIYAIACGIALCGGILFAAVPEFLAKWFLDPKLPEAAEVLAYASSLVVIAGIFQLVDGIQAVTAGLLRGLKDARIPAMLALISYWPIGLALAWTMAFPLGFGGRGVWFGFVIGLSTAAVLLTVRFVLLVKREMKTAR</sequence>
<protein>
    <recommendedName>
        <fullName>Probable multidrug resistance protein NorM</fullName>
    </recommendedName>
    <alternativeName>
        <fullName>Multidrug-efflux transporter</fullName>
    </alternativeName>
</protein>
<feature type="chain" id="PRO_0000164195" description="Probable multidrug resistance protein NorM">
    <location>
        <begin position="1"/>
        <end position="465"/>
    </location>
</feature>
<feature type="transmembrane region" description="Helical" evidence="2">
    <location>
        <begin position="61"/>
        <end position="83"/>
    </location>
</feature>
<feature type="transmembrane region" description="Helical" evidence="2">
    <location>
        <begin position="104"/>
        <end position="126"/>
    </location>
</feature>
<feature type="transmembrane region" description="Helical" evidence="2">
    <location>
        <begin position="141"/>
        <end position="163"/>
    </location>
</feature>
<feature type="transmembrane region" description="Helical" evidence="2">
    <location>
        <begin position="170"/>
        <end position="192"/>
    </location>
</feature>
<feature type="transmembrane region" description="Helical" evidence="2">
    <location>
        <begin position="202"/>
        <end position="224"/>
    </location>
</feature>
<feature type="transmembrane region" description="Helical" evidence="2">
    <location>
        <begin position="251"/>
        <end position="273"/>
    </location>
</feature>
<feature type="transmembrane region" description="Helical" evidence="2">
    <location>
        <begin position="283"/>
        <end position="305"/>
    </location>
</feature>
<feature type="transmembrane region" description="Helical" evidence="2">
    <location>
        <begin position="326"/>
        <end position="348"/>
    </location>
</feature>
<feature type="transmembrane region" description="Helical" evidence="2">
    <location>
        <begin position="368"/>
        <end position="390"/>
    </location>
</feature>
<feature type="transmembrane region" description="Helical" evidence="2">
    <location>
        <begin position="403"/>
        <end position="425"/>
    </location>
</feature>
<feature type="transmembrane region" description="Helical" evidence="2">
    <location>
        <begin position="435"/>
        <end position="457"/>
    </location>
</feature>
<name>NORM_AGRFC</name>
<reference key="1">
    <citation type="journal article" date="2001" name="Science">
        <title>The genome of the natural genetic engineer Agrobacterium tumefaciens C58.</title>
        <authorList>
            <person name="Wood D.W."/>
            <person name="Setubal J.C."/>
            <person name="Kaul R."/>
            <person name="Monks D.E."/>
            <person name="Kitajima J.P."/>
            <person name="Okura V.K."/>
            <person name="Zhou Y."/>
            <person name="Chen L."/>
            <person name="Wood G.E."/>
            <person name="Almeida N.F. Jr."/>
            <person name="Woo L."/>
            <person name="Chen Y."/>
            <person name="Paulsen I.T."/>
            <person name="Eisen J.A."/>
            <person name="Karp P.D."/>
            <person name="Bovee D. Sr."/>
            <person name="Chapman P."/>
            <person name="Clendenning J."/>
            <person name="Deatherage G."/>
            <person name="Gillet W."/>
            <person name="Grant C."/>
            <person name="Kutyavin T."/>
            <person name="Levy R."/>
            <person name="Li M.-J."/>
            <person name="McClelland E."/>
            <person name="Palmieri A."/>
            <person name="Raymond C."/>
            <person name="Rouse G."/>
            <person name="Saenphimmachak C."/>
            <person name="Wu Z."/>
            <person name="Romero P."/>
            <person name="Gordon D."/>
            <person name="Zhang S."/>
            <person name="Yoo H."/>
            <person name="Tao Y."/>
            <person name="Biddle P."/>
            <person name="Jung M."/>
            <person name="Krespan W."/>
            <person name="Perry M."/>
            <person name="Gordon-Kamm B."/>
            <person name="Liao L."/>
            <person name="Kim S."/>
            <person name="Hendrick C."/>
            <person name="Zhao Z.-Y."/>
            <person name="Dolan M."/>
            <person name="Chumley F."/>
            <person name="Tingey S.V."/>
            <person name="Tomb J.-F."/>
            <person name="Gordon M.P."/>
            <person name="Olson M.V."/>
            <person name="Nester E.W."/>
        </authorList>
    </citation>
    <scope>NUCLEOTIDE SEQUENCE [LARGE SCALE GENOMIC DNA]</scope>
    <source>
        <strain>C58 / ATCC 33970</strain>
    </source>
</reference>
<reference key="2">
    <citation type="journal article" date="2001" name="Science">
        <title>Genome sequence of the plant pathogen and biotechnology agent Agrobacterium tumefaciens C58.</title>
        <authorList>
            <person name="Goodner B."/>
            <person name="Hinkle G."/>
            <person name="Gattung S."/>
            <person name="Miller N."/>
            <person name="Blanchard M."/>
            <person name="Qurollo B."/>
            <person name="Goldman B.S."/>
            <person name="Cao Y."/>
            <person name="Askenazi M."/>
            <person name="Halling C."/>
            <person name="Mullin L."/>
            <person name="Houmiel K."/>
            <person name="Gordon J."/>
            <person name="Vaudin M."/>
            <person name="Iartchouk O."/>
            <person name="Epp A."/>
            <person name="Liu F."/>
            <person name="Wollam C."/>
            <person name="Allinger M."/>
            <person name="Doughty D."/>
            <person name="Scott C."/>
            <person name="Lappas C."/>
            <person name="Markelz B."/>
            <person name="Flanagan C."/>
            <person name="Crowell C."/>
            <person name="Gurson J."/>
            <person name="Lomo C."/>
            <person name="Sear C."/>
            <person name="Strub G."/>
            <person name="Cielo C."/>
            <person name="Slater S."/>
        </authorList>
    </citation>
    <scope>NUCLEOTIDE SEQUENCE [LARGE SCALE GENOMIC DNA]</scope>
    <source>
        <strain>C58 / ATCC 33970</strain>
    </source>
</reference>
<keyword id="KW-0050">Antiport</keyword>
<keyword id="KW-0997">Cell inner membrane</keyword>
<keyword id="KW-1003">Cell membrane</keyword>
<keyword id="KW-0406">Ion transport</keyword>
<keyword id="KW-0472">Membrane</keyword>
<keyword id="KW-1185">Reference proteome</keyword>
<keyword id="KW-0812">Transmembrane</keyword>
<keyword id="KW-1133">Transmembrane helix</keyword>
<keyword id="KW-0813">Transport</keyword>
<evidence type="ECO:0000250" key="1"/>
<evidence type="ECO:0000255" key="2"/>
<evidence type="ECO:0000305" key="3"/>
<accession>Q8UDF5</accession>
<accession>Q7CXP9</accession>